<reference key="1">
    <citation type="journal article" date="2006" name="Genome Biol.">
        <title>The genome of Rhizobium leguminosarum has recognizable core and accessory components.</title>
        <authorList>
            <person name="Young J.P.W."/>
            <person name="Crossman L.C."/>
            <person name="Johnston A.W.B."/>
            <person name="Thomson N.R."/>
            <person name="Ghazoui Z.F."/>
            <person name="Hull K.H."/>
            <person name="Wexler M."/>
            <person name="Curson A.R.J."/>
            <person name="Todd J.D."/>
            <person name="Poole P.S."/>
            <person name="Mauchline T.H."/>
            <person name="East A.K."/>
            <person name="Quail M.A."/>
            <person name="Churcher C."/>
            <person name="Arrowsmith C."/>
            <person name="Cherevach I."/>
            <person name="Chillingworth T."/>
            <person name="Clarke K."/>
            <person name="Cronin A."/>
            <person name="Davis P."/>
            <person name="Fraser A."/>
            <person name="Hance Z."/>
            <person name="Hauser H."/>
            <person name="Jagels K."/>
            <person name="Moule S."/>
            <person name="Mungall K."/>
            <person name="Norbertczak H."/>
            <person name="Rabbinowitsch E."/>
            <person name="Sanders M."/>
            <person name="Simmonds M."/>
            <person name="Whitehead S."/>
            <person name="Parkhill J."/>
        </authorList>
    </citation>
    <scope>NUCLEOTIDE SEQUENCE [LARGE SCALE GENOMIC DNA]</scope>
    <source>
        <strain>DSM 114642 / LMG 32736 / 3841</strain>
    </source>
</reference>
<proteinExistence type="inferred from homology"/>
<accession>Q1MDD6</accession>
<name>DER_RHIJ3</name>
<sequence>MSFTVAIVGRPNVGKSTLFNRLVGKKLALVDDTPGVTRDRRPGDARLMGLTFTIIDTAGLEEADAESLQGRMRAQTEAAIDEADLSLFVVDAKSGLTPVDTDLAEMLRRRGKPVVLVANKSEARGSDSGFYDAYTLGLGEPTPISAEHGQGMLDLRDAIVAAIGEDRAYPEKEDVAVTDVDIPQSSDEGDEDEEPIYDDTKPLRVAIVGRPNAGKSTLINRFLGEDRLLTGPEAGITRDSISVEWDWRGRTIKMFDTAGMRRKARVIEKLEKLSVADALRAIRFAETVVIVFDATIPFEKQDLQIVDLVLREGRAAVLAFNKWDMIEDRQAVLADLREKTDRLLPQARGIRAVPISGQTGWGLDKLMQAIIDTDKVWNKRISTARLNRWLETQQVQHPPPAVSGRRIKLKYMTQVKARPPAFMISCTRSDALPESYTRYLINGLRADFDMPSVPIRIHFRSPDNPFEGKKRRT</sequence>
<feature type="chain" id="PRO_1000011714" description="GTPase Der">
    <location>
        <begin position="1"/>
        <end position="473"/>
    </location>
</feature>
<feature type="domain" description="EngA-type G 1">
    <location>
        <begin position="3"/>
        <end position="167"/>
    </location>
</feature>
<feature type="domain" description="EngA-type G 2">
    <location>
        <begin position="203"/>
        <end position="378"/>
    </location>
</feature>
<feature type="domain" description="KH-like" evidence="1">
    <location>
        <begin position="379"/>
        <end position="463"/>
    </location>
</feature>
<feature type="binding site" evidence="1">
    <location>
        <begin position="9"/>
        <end position="16"/>
    </location>
    <ligand>
        <name>GTP</name>
        <dbReference type="ChEBI" id="CHEBI:37565"/>
        <label>1</label>
    </ligand>
</feature>
<feature type="binding site" evidence="1">
    <location>
        <begin position="56"/>
        <end position="60"/>
    </location>
    <ligand>
        <name>GTP</name>
        <dbReference type="ChEBI" id="CHEBI:37565"/>
        <label>1</label>
    </ligand>
</feature>
<feature type="binding site" evidence="1">
    <location>
        <begin position="119"/>
        <end position="122"/>
    </location>
    <ligand>
        <name>GTP</name>
        <dbReference type="ChEBI" id="CHEBI:37565"/>
        <label>1</label>
    </ligand>
</feature>
<feature type="binding site" evidence="1">
    <location>
        <begin position="209"/>
        <end position="216"/>
    </location>
    <ligand>
        <name>GTP</name>
        <dbReference type="ChEBI" id="CHEBI:37565"/>
        <label>2</label>
    </ligand>
</feature>
<feature type="binding site" evidence="1">
    <location>
        <begin position="256"/>
        <end position="260"/>
    </location>
    <ligand>
        <name>GTP</name>
        <dbReference type="ChEBI" id="CHEBI:37565"/>
        <label>2</label>
    </ligand>
</feature>
<feature type="binding site" evidence="1">
    <location>
        <begin position="321"/>
        <end position="324"/>
    </location>
    <ligand>
        <name>GTP</name>
        <dbReference type="ChEBI" id="CHEBI:37565"/>
        <label>2</label>
    </ligand>
</feature>
<gene>
    <name evidence="1" type="primary">der</name>
    <name type="synonym">engA</name>
    <name type="ordered locus">RL3553</name>
</gene>
<comment type="function">
    <text evidence="1">GTPase that plays an essential role in the late steps of ribosome biogenesis.</text>
</comment>
<comment type="subunit">
    <text evidence="1">Associates with the 50S ribosomal subunit.</text>
</comment>
<comment type="similarity">
    <text evidence="1">Belongs to the TRAFAC class TrmE-Era-EngA-EngB-Septin-like GTPase superfamily. EngA (Der) GTPase family.</text>
</comment>
<organism>
    <name type="scientific">Rhizobium johnstonii (strain DSM 114642 / LMG 32736 / 3841)</name>
    <name type="common">Rhizobium leguminosarum bv. viciae</name>
    <dbReference type="NCBI Taxonomy" id="216596"/>
    <lineage>
        <taxon>Bacteria</taxon>
        <taxon>Pseudomonadati</taxon>
        <taxon>Pseudomonadota</taxon>
        <taxon>Alphaproteobacteria</taxon>
        <taxon>Hyphomicrobiales</taxon>
        <taxon>Rhizobiaceae</taxon>
        <taxon>Rhizobium/Agrobacterium group</taxon>
        <taxon>Rhizobium</taxon>
        <taxon>Rhizobium johnstonii</taxon>
    </lineage>
</organism>
<dbReference type="EMBL" id="AM236080">
    <property type="protein sequence ID" value="CAK09041.1"/>
    <property type="molecule type" value="Genomic_DNA"/>
</dbReference>
<dbReference type="RefSeq" id="WP_011653023.1">
    <property type="nucleotide sequence ID" value="NC_008380.1"/>
</dbReference>
<dbReference type="SMR" id="Q1MDD6"/>
<dbReference type="EnsemblBacteria" id="CAK09041">
    <property type="protein sequence ID" value="CAK09041"/>
    <property type="gene ID" value="RL3553"/>
</dbReference>
<dbReference type="KEGG" id="rle:RL3553"/>
<dbReference type="eggNOG" id="COG1160">
    <property type="taxonomic scope" value="Bacteria"/>
</dbReference>
<dbReference type="HOGENOM" id="CLU_016077_5_0_5"/>
<dbReference type="Proteomes" id="UP000006575">
    <property type="component" value="Chromosome"/>
</dbReference>
<dbReference type="GO" id="GO:0005525">
    <property type="term" value="F:GTP binding"/>
    <property type="evidence" value="ECO:0007669"/>
    <property type="project" value="UniProtKB-UniRule"/>
</dbReference>
<dbReference type="GO" id="GO:0042254">
    <property type="term" value="P:ribosome biogenesis"/>
    <property type="evidence" value="ECO:0007669"/>
    <property type="project" value="UniProtKB-KW"/>
</dbReference>
<dbReference type="CDD" id="cd01894">
    <property type="entry name" value="EngA1"/>
    <property type="match status" value="1"/>
</dbReference>
<dbReference type="CDD" id="cd01895">
    <property type="entry name" value="EngA2"/>
    <property type="match status" value="1"/>
</dbReference>
<dbReference type="FunFam" id="3.30.300.20:FF:000004">
    <property type="entry name" value="GTPase Der"/>
    <property type="match status" value="1"/>
</dbReference>
<dbReference type="FunFam" id="3.40.50.300:FF:000057">
    <property type="entry name" value="GTPase Der"/>
    <property type="match status" value="1"/>
</dbReference>
<dbReference type="Gene3D" id="3.30.300.20">
    <property type="match status" value="1"/>
</dbReference>
<dbReference type="Gene3D" id="3.40.50.300">
    <property type="entry name" value="P-loop containing nucleotide triphosphate hydrolases"/>
    <property type="match status" value="2"/>
</dbReference>
<dbReference type="HAMAP" id="MF_00195">
    <property type="entry name" value="GTPase_Der"/>
    <property type="match status" value="1"/>
</dbReference>
<dbReference type="InterPro" id="IPR031166">
    <property type="entry name" value="G_ENGA"/>
</dbReference>
<dbReference type="InterPro" id="IPR006073">
    <property type="entry name" value="GTP-bd"/>
</dbReference>
<dbReference type="InterPro" id="IPR016484">
    <property type="entry name" value="GTPase_Der"/>
</dbReference>
<dbReference type="InterPro" id="IPR032859">
    <property type="entry name" value="KH_dom-like"/>
</dbReference>
<dbReference type="InterPro" id="IPR015946">
    <property type="entry name" value="KH_dom-like_a/b"/>
</dbReference>
<dbReference type="InterPro" id="IPR027417">
    <property type="entry name" value="P-loop_NTPase"/>
</dbReference>
<dbReference type="InterPro" id="IPR005225">
    <property type="entry name" value="Small_GTP-bd"/>
</dbReference>
<dbReference type="NCBIfam" id="TIGR03594">
    <property type="entry name" value="GTPase_EngA"/>
    <property type="match status" value="1"/>
</dbReference>
<dbReference type="NCBIfam" id="TIGR00231">
    <property type="entry name" value="small_GTP"/>
    <property type="match status" value="2"/>
</dbReference>
<dbReference type="PANTHER" id="PTHR43834">
    <property type="entry name" value="GTPASE DER"/>
    <property type="match status" value="1"/>
</dbReference>
<dbReference type="PANTHER" id="PTHR43834:SF6">
    <property type="entry name" value="GTPASE DER"/>
    <property type="match status" value="1"/>
</dbReference>
<dbReference type="Pfam" id="PF14714">
    <property type="entry name" value="KH_dom-like"/>
    <property type="match status" value="1"/>
</dbReference>
<dbReference type="Pfam" id="PF01926">
    <property type="entry name" value="MMR_HSR1"/>
    <property type="match status" value="2"/>
</dbReference>
<dbReference type="PIRSF" id="PIRSF006485">
    <property type="entry name" value="GTP-binding_EngA"/>
    <property type="match status" value="1"/>
</dbReference>
<dbReference type="PRINTS" id="PR00326">
    <property type="entry name" value="GTP1OBG"/>
</dbReference>
<dbReference type="SUPFAM" id="SSF52540">
    <property type="entry name" value="P-loop containing nucleoside triphosphate hydrolases"/>
    <property type="match status" value="2"/>
</dbReference>
<dbReference type="PROSITE" id="PS51712">
    <property type="entry name" value="G_ENGA"/>
    <property type="match status" value="2"/>
</dbReference>
<keyword id="KW-0342">GTP-binding</keyword>
<keyword id="KW-0547">Nucleotide-binding</keyword>
<keyword id="KW-0677">Repeat</keyword>
<keyword id="KW-0690">Ribosome biogenesis</keyword>
<protein>
    <recommendedName>
        <fullName evidence="1">GTPase Der</fullName>
    </recommendedName>
    <alternativeName>
        <fullName evidence="1">GTP-binding protein EngA</fullName>
    </alternativeName>
</protein>
<evidence type="ECO:0000255" key="1">
    <source>
        <dbReference type="HAMAP-Rule" id="MF_00195"/>
    </source>
</evidence>